<name>YPSA_BACSU</name>
<reference key="1">
    <citation type="journal article" date="1996" name="Microbiology">
        <title>Sequence analysis of the Bacillus subtilis chromosome region between the serA and kdg loci cloned in a yeast artificial chromosome.</title>
        <authorList>
            <person name="Sorokin A.V."/>
            <person name="Azevedo V."/>
            <person name="Zumstein E."/>
            <person name="Galleron N."/>
            <person name="Ehrlich S.D."/>
            <person name="Serror P."/>
        </authorList>
    </citation>
    <scope>NUCLEOTIDE SEQUENCE [GENOMIC DNA]</scope>
    <source>
        <strain>168 / Marburg / ATCC 6051 / DSM 10 / JCM 1465 / NBRC 13719 / NCIMB 3610 / NRRL NRS-744 / VKM B-501</strain>
    </source>
</reference>
<reference key="2">
    <citation type="journal article" date="1997" name="Nature">
        <title>The complete genome sequence of the Gram-positive bacterium Bacillus subtilis.</title>
        <authorList>
            <person name="Kunst F."/>
            <person name="Ogasawara N."/>
            <person name="Moszer I."/>
            <person name="Albertini A.M."/>
            <person name="Alloni G."/>
            <person name="Azevedo V."/>
            <person name="Bertero M.G."/>
            <person name="Bessieres P."/>
            <person name="Bolotin A."/>
            <person name="Borchert S."/>
            <person name="Borriss R."/>
            <person name="Boursier L."/>
            <person name="Brans A."/>
            <person name="Braun M."/>
            <person name="Brignell S.C."/>
            <person name="Bron S."/>
            <person name="Brouillet S."/>
            <person name="Bruschi C.V."/>
            <person name="Caldwell B."/>
            <person name="Capuano V."/>
            <person name="Carter N.M."/>
            <person name="Choi S.-K."/>
            <person name="Codani J.-J."/>
            <person name="Connerton I.F."/>
            <person name="Cummings N.J."/>
            <person name="Daniel R.A."/>
            <person name="Denizot F."/>
            <person name="Devine K.M."/>
            <person name="Duesterhoeft A."/>
            <person name="Ehrlich S.D."/>
            <person name="Emmerson P.T."/>
            <person name="Entian K.-D."/>
            <person name="Errington J."/>
            <person name="Fabret C."/>
            <person name="Ferrari E."/>
            <person name="Foulger D."/>
            <person name="Fritz C."/>
            <person name="Fujita M."/>
            <person name="Fujita Y."/>
            <person name="Fuma S."/>
            <person name="Galizzi A."/>
            <person name="Galleron N."/>
            <person name="Ghim S.-Y."/>
            <person name="Glaser P."/>
            <person name="Goffeau A."/>
            <person name="Golightly E.J."/>
            <person name="Grandi G."/>
            <person name="Guiseppi G."/>
            <person name="Guy B.J."/>
            <person name="Haga K."/>
            <person name="Haiech J."/>
            <person name="Harwood C.R."/>
            <person name="Henaut A."/>
            <person name="Hilbert H."/>
            <person name="Holsappel S."/>
            <person name="Hosono S."/>
            <person name="Hullo M.-F."/>
            <person name="Itaya M."/>
            <person name="Jones L.-M."/>
            <person name="Joris B."/>
            <person name="Karamata D."/>
            <person name="Kasahara Y."/>
            <person name="Klaerr-Blanchard M."/>
            <person name="Klein C."/>
            <person name="Kobayashi Y."/>
            <person name="Koetter P."/>
            <person name="Koningstein G."/>
            <person name="Krogh S."/>
            <person name="Kumano M."/>
            <person name="Kurita K."/>
            <person name="Lapidus A."/>
            <person name="Lardinois S."/>
            <person name="Lauber J."/>
            <person name="Lazarevic V."/>
            <person name="Lee S.-M."/>
            <person name="Levine A."/>
            <person name="Liu H."/>
            <person name="Masuda S."/>
            <person name="Mauel C."/>
            <person name="Medigue C."/>
            <person name="Medina N."/>
            <person name="Mellado R.P."/>
            <person name="Mizuno M."/>
            <person name="Moestl D."/>
            <person name="Nakai S."/>
            <person name="Noback M."/>
            <person name="Noone D."/>
            <person name="O'Reilly M."/>
            <person name="Ogawa K."/>
            <person name="Ogiwara A."/>
            <person name="Oudega B."/>
            <person name="Park S.-H."/>
            <person name="Parro V."/>
            <person name="Pohl T.M."/>
            <person name="Portetelle D."/>
            <person name="Porwollik S."/>
            <person name="Prescott A.M."/>
            <person name="Presecan E."/>
            <person name="Pujic P."/>
            <person name="Purnelle B."/>
            <person name="Rapoport G."/>
            <person name="Rey M."/>
            <person name="Reynolds S."/>
            <person name="Rieger M."/>
            <person name="Rivolta C."/>
            <person name="Rocha E."/>
            <person name="Roche B."/>
            <person name="Rose M."/>
            <person name="Sadaie Y."/>
            <person name="Sato T."/>
            <person name="Scanlan E."/>
            <person name="Schleich S."/>
            <person name="Schroeter R."/>
            <person name="Scoffone F."/>
            <person name="Sekiguchi J."/>
            <person name="Sekowska A."/>
            <person name="Seror S.J."/>
            <person name="Serror P."/>
            <person name="Shin B.-S."/>
            <person name="Soldo B."/>
            <person name="Sorokin A."/>
            <person name="Tacconi E."/>
            <person name="Takagi T."/>
            <person name="Takahashi H."/>
            <person name="Takemaru K."/>
            <person name="Takeuchi M."/>
            <person name="Tamakoshi A."/>
            <person name="Tanaka T."/>
            <person name="Terpstra P."/>
            <person name="Tognoni A."/>
            <person name="Tosato V."/>
            <person name="Uchiyama S."/>
            <person name="Vandenbol M."/>
            <person name="Vannier F."/>
            <person name="Vassarotti A."/>
            <person name="Viari A."/>
            <person name="Wambutt R."/>
            <person name="Wedler E."/>
            <person name="Wedler H."/>
            <person name="Weitzenegger T."/>
            <person name="Winters P."/>
            <person name="Wipat A."/>
            <person name="Yamamoto H."/>
            <person name="Yamane K."/>
            <person name="Yasumoto K."/>
            <person name="Yata K."/>
            <person name="Yoshida K."/>
            <person name="Yoshikawa H.-F."/>
            <person name="Zumstein E."/>
            <person name="Yoshikawa H."/>
            <person name="Danchin A."/>
        </authorList>
    </citation>
    <scope>NUCLEOTIDE SEQUENCE [LARGE SCALE GENOMIC DNA]</scope>
    <source>
        <strain>168</strain>
    </source>
</reference>
<protein>
    <recommendedName>
        <fullName evidence="1">UPF0398 protein YpsA</fullName>
    </recommendedName>
</protein>
<dbReference type="EMBL" id="L47838">
    <property type="protein sequence ID" value="AAB38471.1"/>
    <property type="molecule type" value="Genomic_DNA"/>
</dbReference>
<dbReference type="EMBL" id="AL009126">
    <property type="protein sequence ID" value="CAB14136.3"/>
    <property type="molecule type" value="Genomic_DNA"/>
</dbReference>
<dbReference type="PIR" id="D69941">
    <property type="entry name" value="D69941"/>
</dbReference>
<dbReference type="RefSeq" id="NP_390101.2">
    <property type="nucleotide sequence ID" value="NC_000964.3"/>
</dbReference>
<dbReference type="RefSeq" id="WP_004398656.1">
    <property type="nucleotide sequence ID" value="NZ_OZ025638.1"/>
</dbReference>
<dbReference type="RefSeq" id="WP_010886550.1">
    <property type="nucleotide sequence ID" value="NC_000964.3"/>
</dbReference>
<dbReference type="PDB" id="2NX2">
    <property type="method" value="X-ray"/>
    <property type="resolution" value="2.00 A"/>
    <property type="chains" value="A=2-180"/>
</dbReference>
<dbReference type="PDBsum" id="2NX2"/>
<dbReference type="SMR" id="P50838"/>
<dbReference type="FunCoup" id="P50838">
    <property type="interactions" value="72"/>
</dbReference>
<dbReference type="STRING" id="224308.BSU22190"/>
<dbReference type="PaxDb" id="224308-BSU22190"/>
<dbReference type="EnsemblBacteria" id="CAB14136">
    <property type="protein sequence ID" value="CAB14136"/>
    <property type="gene ID" value="BSU_22190"/>
</dbReference>
<dbReference type="GeneID" id="939056"/>
<dbReference type="KEGG" id="bsu:BSU22190"/>
<dbReference type="PATRIC" id="fig|224308.179.peg.2423"/>
<dbReference type="eggNOG" id="COG4474">
    <property type="taxonomic scope" value="Bacteria"/>
</dbReference>
<dbReference type="InParanoid" id="P50838"/>
<dbReference type="OrthoDB" id="2301957at2"/>
<dbReference type="BioCyc" id="BSUB:BSU22190-MONOMER"/>
<dbReference type="EvolutionaryTrace" id="P50838"/>
<dbReference type="Proteomes" id="UP000001570">
    <property type="component" value="Chromosome"/>
</dbReference>
<dbReference type="Gene3D" id="3.40.50.450">
    <property type="match status" value="1"/>
</dbReference>
<dbReference type="HAMAP" id="MF_01575">
    <property type="entry name" value="UPF0398"/>
    <property type="match status" value="1"/>
</dbReference>
<dbReference type="InterPro" id="IPR010697">
    <property type="entry name" value="YspA"/>
</dbReference>
<dbReference type="NCBIfam" id="NF010181">
    <property type="entry name" value="PRK13660.1"/>
    <property type="match status" value="1"/>
</dbReference>
<dbReference type="PANTHER" id="PTHR38440:SF1">
    <property type="entry name" value="UPF0398 PROTEIN SPR0331"/>
    <property type="match status" value="1"/>
</dbReference>
<dbReference type="PANTHER" id="PTHR38440">
    <property type="entry name" value="UPF0398 PROTEIN YPSA"/>
    <property type="match status" value="1"/>
</dbReference>
<dbReference type="Pfam" id="PF06908">
    <property type="entry name" value="YpsA"/>
    <property type="match status" value="1"/>
</dbReference>
<dbReference type="PIRSF" id="PIRSF021290">
    <property type="entry name" value="DUF1273"/>
    <property type="match status" value="1"/>
</dbReference>
<dbReference type="SUPFAM" id="SSF102405">
    <property type="entry name" value="MCP/YpsA-like"/>
    <property type="match status" value="1"/>
</dbReference>
<accession>P50838</accession>
<comment type="similarity">
    <text evidence="1">Belongs to the UPF0398 family.</text>
</comment>
<feature type="chain" id="PRO_0000049724" description="UPF0398 protein YpsA">
    <location>
        <begin position="1"/>
        <end position="180"/>
    </location>
</feature>
<feature type="strand" evidence="2">
    <location>
        <begin position="3"/>
        <end position="8"/>
    </location>
</feature>
<feature type="helix" evidence="2">
    <location>
        <begin position="11"/>
        <end position="14"/>
    </location>
</feature>
<feature type="helix" evidence="2">
    <location>
        <begin position="22"/>
        <end position="39"/>
    </location>
</feature>
<feature type="turn" evidence="2">
    <location>
        <begin position="40"/>
        <end position="42"/>
    </location>
</feature>
<feature type="strand" evidence="2">
    <location>
        <begin position="45"/>
        <end position="48"/>
    </location>
</feature>
<feature type="helix" evidence="2">
    <location>
        <begin position="54"/>
        <end position="63"/>
    </location>
</feature>
<feature type="turn" evidence="2">
    <location>
        <begin position="64"/>
        <end position="68"/>
    </location>
</feature>
<feature type="strand" evidence="2">
    <location>
        <begin position="73"/>
        <end position="81"/>
    </location>
</feature>
<feature type="turn" evidence="2">
    <location>
        <begin position="83"/>
        <end position="86"/>
    </location>
</feature>
<feature type="helix" evidence="2">
    <location>
        <begin position="89"/>
        <end position="101"/>
    </location>
</feature>
<feature type="strand" evidence="2">
    <location>
        <begin position="103"/>
        <end position="112"/>
    </location>
</feature>
<feature type="helix" evidence="2">
    <location>
        <begin position="116"/>
        <end position="129"/>
    </location>
</feature>
<feature type="strand" evidence="2">
    <location>
        <begin position="130"/>
        <end position="136"/>
    </location>
</feature>
<feature type="turn" evidence="2">
    <location>
        <begin position="139"/>
        <end position="141"/>
    </location>
</feature>
<feature type="helix" evidence="2">
    <location>
        <begin position="146"/>
        <end position="159"/>
    </location>
</feature>
<feature type="strand" evidence="2">
    <location>
        <begin position="163"/>
        <end position="166"/>
    </location>
</feature>
<feature type="helix" evidence="2">
    <location>
        <begin position="168"/>
        <end position="176"/>
    </location>
</feature>
<proteinExistence type="evidence at protein level"/>
<evidence type="ECO:0000255" key="1">
    <source>
        <dbReference type="HAMAP-Rule" id="MF_01575"/>
    </source>
</evidence>
<evidence type="ECO:0007829" key="2">
    <source>
        <dbReference type="PDB" id="2NX2"/>
    </source>
</evidence>
<keyword id="KW-0002">3D-structure</keyword>
<keyword id="KW-1185">Reference proteome</keyword>
<organism>
    <name type="scientific">Bacillus subtilis (strain 168)</name>
    <dbReference type="NCBI Taxonomy" id="224308"/>
    <lineage>
        <taxon>Bacteria</taxon>
        <taxon>Bacillati</taxon>
        <taxon>Bacillota</taxon>
        <taxon>Bacilli</taxon>
        <taxon>Bacillales</taxon>
        <taxon>Bacillaceae</taxon>
        <taxon>Bacillus</taxon>
    </lineage>
</organism>
<sequence length="180" mass="21059">MKVLAITGYKPFELGIFKQDDKALYYIKKAIKNRLIAFLDEGLEWILISGQLGVELWAAEAAYDLQEEYPDLKVAVITPFYEQEKNWKEPNKEQYEAVLAQADYEASLTHRPYESPLQFKQKNQFFIDKSDGLLLLYDPEKEGSPKYMLGTAEKRREQDGYPIYFITMDDLRVTVEEDSY</sequence>
<gene>
    <name type="primary">ypsA</name>
    <name type="ordered locus">BSU22190</name>
</gene>